<gene>
    <name type="primary">rluC</name>
    <name type="ordered locus">YPO1591</name>
    <name type="ordered locus">y1750</name>
    <name type="ordered locus">YP_2262</name>
</gene>
<comment type="function">
    <text evidence="1">Responsible for synthesis of pseudouridine from uracil at positions 955, 2504 and 2580 in 23S ribosomal RNA.</text>
</comment>
<comment type="catalytic activity">
    <reaction>
        <text>uridine(955/2504/2580) in 23S rRNA = pseudouridine(955/2504/2580) in 23S rRNA</text>
        <dbReference type="Rhea" id="RHEA:42528"/>
        <dbReference type="Rhea" id="RHEA-COMP:10099"/>
        <dbReference type="Rhea" id="RHEA-COMP:10100"/>
        <dbReference type="ChEBI" id="CHEBI:65314"/>
        <dbReference type="ChEBI" id="CHEBI:65315"/>
        <dbReference type="EC" id="5.4.99.24"/>
    </reaction>
</comment>
<comment type="similarity">
    <text evidence="3">Belongs to the pseudouridine synthase RluA family.</text>
</comment>
<comment type="sequence caution" evidence="3">
    <conflict type="erroneous initiation">
        <sequence resource="EMBL-CDS" id="AAM85318"/>
    </conflict>
</comment>
<keyword id="KW-0413">Isomerase</keyword>
<keyword id="KW-1185">Reference proteome</keyword>
<keyword id="KW-0694">RNA-binding</keyword>
<keyword id="KW-0698">rRNA processing</keyword>
<evidence type="ECO:0000250" key="1"/>
<evidence type="ECO:0000255" key="2">
    <source>
        <dbReference type="PROSITE-ProRule" id="PRU00182"/>
    </source>
</evidence>
<evidence type="ECO:0000305" key="3"/>
<name>RLUC_YERPE</name>
<feature type="chain" id="PRO_0000162682" description="Ribosomal large subunit pseudouridine synthase C">
    <location>
        <begin position="1"/>
        <end position="320"/>
    </location>
</feature>
<feature type="domain" description="S4 RNA-binding" evidence="2">
    <location>
        <begin position="20"/>
        <end position="83"/>
    </location>
</feature>
<feature type="active site" evidence="1">
    <location>
        <position position="144"/>
    </location>
</feature>
<proteinExistence type="inferred from homology"/>
<accession>Q8ZFU1</accession>
<accession>Q0WGI6</accession>
<accession>Q8D0Q8</accession>
<reference key="1">
    <citation type="journal article" date="2001" name="Nature">
        <title>Genome sequence of Yersinia pestis, the causative agent of plague.</title>
        <authorList>
            <person name="Parkhill J."/>
            <person name="Wren B.W."/>
            <person name="Thomson N.R."/>
            <person name="Titball R.W."/>
            <person name="Holden M.T.G."/>
            <person name="Prentice M.B."/>
            <person name="Sebaihia M."/>
            <person name="James K.D."/>
            <person name="Churcher C.M."/>
            <person name="Mungall K.L."/>
            <person name="Baker S."/>
            <person name="Basham D."/>
            <person name="Bentley S.D."/>
            <person name="Brooks K."/>
            <person name="Cerdeno-Tarraga A.-M."/>
            <person name="Chillingworth T."/>
            <person name="Cronin A."/>
            <person name="Davies R.M."/>
            <person name="Davis P."/>
            <person name="Dougan G."/>
            <person name="Feltwell T."/>
            <person name="Hamlin N."/>
            <person name="Holroyd S."/>
            <person name="Jagels K."/>
            <person name="Karlyshev A.V."/>
            <person name="Leather S."/>
            <person name="Moule S."/>
            <person name="Oyston P.C.F."/>
            <person name="Quail M.A."/>
            <person name="Rutherford K.M."/>
            <person name="Simmonds M."/>
            <person name="Skelton J."/>
            <person name="Stevens K."/>
            <person name="Whitehead S."/>
            <person name="Barrell B.G."/>
        </authorList>
    </citation>
    <scope>NUCLEOTIDE SEQUENCE [LARGE SCALE GENOMIC DNA]</scope>
    <source>
        <strain>CO-92 / Biovar Orientalis</strain>
    </source>
</reference>
<reference key="2">
    <citation type="journal article" date="2002" name="J. Bacteriol.">
        <title>Genome sequence of Yersinia pestis KIM.</title>
        <authorList>
            <person name="Deng W."/>
            <person name="Burland V."/>
            <person name="Plunkett G. III"/>
            <person name="Boutin A."/>
            <person name="Mayhew G.F."/>
            <person name="Liss P."/>
            <person name="Perna N.T."/>
            <person name="Rose D.J."/>
            <person name="Mau B."/>
            <person name="Zhou S."/>
            <person name="Schwartz D.C."/>
            <person name="Fetherston J.D."/>
            <person name="Lindler L.E."/>
            <person name="Brubaker R.R."/>
            <person name="Plano G.V."/>
            <person name="Straley S.C."/>
            <person name="McDonough K.A."/>
            <person name="Nilles M.L."/>
            <person name="Matson J.S."/>
            <person name="Blattner F.R."/>
            <person name="Perry R.D."/>
        </authorList>
    </citation>
    <scope>NUCLEOTIDE SEQUENCE [LARGE SCALE GENOMIC DNA]</scope>
    <source>
        <strain>KIM10+ / Biovar Mediaevalis</strain>
    </source>
</reference>
<reference key="3">
    <citation type="journal article" date="2004" name="DNA Res.">
        <title>Complete genome sequence of Yersinia pestis strain 91001, an isolate avirulent to humans.</title>
        <authorList>
            <person name="Song Y."/>
            <person name="Tong Z."/>
            <person name="Wang J."/>
            <person name="Wang L."/>
            <person name="Guo Z."/>
            <person name="Han Y."/>
            <person name="Zhang J."/>
            <person name="Pei D."/>
            <person name="Zhou D."/>
            <person name="Qin H."/>
            <person name="Pang X."/>
            <person name="Han Y."/>
            <person name="Zhai J."/>
            <person name="Li M."/>
            <person name="Cui B."/>
            <person name="Qi Z."/>
            <person name="Jin L."/>
            <person name="Dai R."/>
            <person name="Chen F."/>
            <person name="Li S."/>
            <person name="Ye C."/>
            <person name="Du Z."/>
            <person name="Lin W."/>
            <person name="Wang J."/>
            <person name="Yu J."/>
            <person name="Yang H."/>
            <person name="Wang J."/>
            <person name="Huang P."/>
            <person name="Yang R."/>
        </authorList>
    </citation>
    <scope>NUCLEOTIDE SEQUENCE [LARGE SCALE GENOMIC DNA]</scope>
    <source>
        <strain>91001 / Biovar Mediaevalis</strain>
    </source>
</reference>
<protein>
    <recommendedName>
        <fullName>Ribosomal large subunit pseudouridine synthase C</fullName>
        <ecNumber>5.4.99.24</ecNumber>
    </recommendedName>
    <alternativeName>
        <fullName>23S rRNA pseudouridine(955/2504/2580) synthase</fullName>
    </alternativeName>
    <alternativeName>
        <fullName>rRNA pseudouridylate synthase C</fullName>
    </alternativeName>
    <alternativeName>
        <fullName>rRNA-uridine isomerase C</fullName>
    </alternativeName>
</protein>
<organism>
    <name type="scientific">Yersinia pestis</name>
    <dbReference type="NCBI Taxonomy" id="632"/>
    <lineage>
        <taxon>Bacteria</taxon>
        <taxon>Pseudomonadati</taxon>
        <taxon>Pseudomonadota</taxon>
        <taxon>Gammaproteobacteria</taxon>
        <taxon>Enterobacterales</taxon>
        <taxon>Yersiniaceae</taxon>
        <taxon>Yersinia</taxon>
    </lineage>
</organism>
<dbReference type="EC" id="5.4.99.24"/>
<dbReference type="EMBL" id="AL590842">
    <property type="protein sequence ID" value="CAL20236.1"/>
    <property type="molecule type" value="Genomic_DNA"/>
</dbReference>
<dbReference type="EMBL" id="AE009952">
    <property type="protein sequence ID" value="AAM85318.1"/>
    <property type="status" value="ALT_INIT"/>
    <property type="molecule type" value="Genomic_DNA"/>
</dbReference>
<dbReference type="EMBL" id="AE017042">
    <property type="protein sequence ID" value="AAS62468.1"/>
    <property type="molecule type" value="Genomic_DNA"/>
</dbReference>
<dbReference type="PIR" id="AB0194">
    <property type="entry name" value="AB0194"/>
</dbReference>
<dbReference type="RefSeq" id="WP_002210927.1">
    <property type="nucleotide sequence ID" value="NZ_WUCM01000105.1"/>
</dbReference>
<dbReference type="RefSeq" id="YP_002346602.1">
    <property type="nucleotide sequence ID" value="NC_003143.1"/>
</dbReference>
<dbReference type="SMR" id="Q8ZFU1"/>
<dbReference type="STRING" id="214092.YPO1591"/>
<dbReference type="PaxDb" id="214092-YPO1591"/>
<dbReference type="EnsemblBacteria" id="AAS62468">
    <property type="protein sequence ID" value="AAS62468"/>
    <property type="gene ID" value="YP_2262"/>
</dbReference>
<dbReference type="GeneID" id="57976980"/>
<dbReference type="KEGG" id="ype:YPO1591"/>
<dbReference type="KEGG" id="ypk:y1750"/>
<dbReference type="KEGG" id="ypm:YP_2262"/>
<dbReference type="PATRIC" id="fig|214092.21.peg.1934"/>
<dbReference type="eggNOG" id="COG0564">
    <property type="taxonomic scope" value="Bacteria"/>
</dbReference>
<dbReference type="HOGENOM" id="CLU_016902_1_1_6"/>
<dbReference type="OMA" id="PKSHVYR"/>
<dbReference type="OrthoDB" id="9807829at2"/>
<dbReference type="Proteomes" id="UP000000815">
    <property type="component" value="Chromosome"/>
</dbReference>
<dbReference type="Proteomes" id="UP000001019">
    <property type="component" value="Chromosome"/>
</dbReference>
<dbReference type="Proteomes" id="UP000002490">
    <property type="component" value="Chromosome"/>
</dbReference>
<dbReference type="GO" id="GO:0160141">
    <property type="term" value="F:23S rRNA pseudouridine(955/2504/2580) synthase activity"/>
    <property type="evidence" value="ECO:0007669"/>
    <property type="project" value="UniProtKB-EC"/>
</dbReference>
<dbReference type="GO" id="GO:0009982">
    <property type="term" value="F:pseudouridine synthase activity"/>
    <property type="evidence" value="ECO:0000318"/>
    <property type="project" value="GO_Central"/>
</dbReference>
<dbReference type="GO" id="GO:0003723">
    <property type="term" value="F:RNA binding"/>
    <property type="evidence" value="ECO:0007669"/>
    <property type="project" value="UniProtKB-KW"/>
</dbReference>
<dbReference type="GO" id="GO:0000455">
    <property type="term" value="P:enzyme-directed rRNA pseudouridine synthesis"/>
    <property type="evidence" value="ECO:0000318"/>
    <property type="project" value="GO_Central"/>
</dbReference>
<dbReference type="CDD" id="cd02869">
    <property type="entry name" value="PseudoU_synth_RluA_like"/>
    <property type="match status" value="1"/>
</dbReference>
<dbReference type="CDD" id="cd00165">
    <property type="entry name" value="S4"/>
    <property type="match status" value="1"/>
</dbReference>
<dbReference type="FunFam" id="3.10.290.10:FF:000010">
    <property type="entry name" value="Pseudouridine synthase"/>
    <property type="match status" value="1"/>
</dbReference>
<dbReference type="FunFam" id="3.30.2350.10:FF:000007">
    <property type="entry name" value="Pseudouridine synthase"/>
    <property type="match status" value="1"/>
</dbReference>
<dbReference type="Gene3D" id="3.30.2350.10">
    <property type="entry name" value="Pseudouridine synthase"/>
    <property type="match status" value="1"/>
</dbReference>
<dbReference type="Gene3D" id="3.10.290.10">
    <property type="entry name" value="RNA-binding S4 domain"/>
    <property type="match status" value="1"/>
</dbReference>
<dbReference type="InterPro" id="IPR020103">
    <property type="entry name" value="PsdUridine_synth_cat_dom_sf"/>
</dbReference>
<dbReference type="InterPro" id="IPR006224">
    <property type="entry name" value="PsdUridine_synth_RluA-like_CS"/>
</dbReference>
<dbReference type="InterPro" id="IPR006225">
    <property type="entry name" value="PsdUridine_synth_RluC/D"/>
</dbReference>
<dbReference type="InterPro" id="IPR006145">
    <property type="entry name" value="PsdUridine_synth_RsuA/RluA"/>
</dbReference>
<dbReference type="InterPro" id="IPR050188">
    <property type="entry name" value="RluA_PseudoU_synthase"/>
</dbReference>
<dbReference type="InterPro" id="IPR002942">
    <property type="entry name" value="S4_RNA-bd"/>
</dbReference>
<dbReference type="InterPro" id="IPR036986">
    <property type="entry name" value="S4_RNA-bd_sf"/>
</dbReference>
<dbReference type="NCBIfam" id="NF008249">
    <property type="entry name" value="PRK11025.1"/>
    <property type="match status" value="1"/>
</dbReference>
<dbReference type="NCBIfam" id="TIGR00005">
    <property type="entry name" value="rluA_subfam"/>
    <property type="match status" value="1"/>
</dbReference>
<dbReference type="PANTHER" id="PTHR21600">
    <property type="entry name" value="MITOCHONDRIAL RNA PSEUDOURIDINE SYNTHASE"/>
    <property type="match status" value="1"/>
</dbReference>
<dbReference type="PANTHER" id="PTHR21600:SF92">
    <property type="entry name" value="RIBOSOMAL LARGE SUBUNIT PSEUDOURIDINE SYNTHASE C"/>
    <property type="match status" value="1"/>
</dbReference>
<dbReference type="Pfam" id="PF00849">
    <property type="entry name" value="PseudoU_synth_2"/>
    <property type="match status" value="1"/>
</dbReference>
<dbReference type="Pfam" id="PF01479">
    <property type="entry name" value="S4"/>
    <property type="match status" value="1"/>
</dbReference>
<dbReference type="SMART" id="SM00363">
    <property type="entry name" value="S4"/>
    <property type="match status" value="1"/>
</dbReference>
<dbReference type="SUPFAM" id="SSF55174">
    <property type="entry name" value="Alpha-L RNA-binding motif"/>
    <property type="match status" value="1"/>
</dbReference>
<dbReference type="SUPFAM" id="SSF55120">
    <property type="entry name" value="Pseudouridine synthase"/>
    <property type="match status" value="1"/>
</dbReference>
<dbReference type="PROSITE" id="PS01129">
    <property type="entry name" value="PSI_RLU"/>
    <property type="match status" value="1"/>
</dbReference>
<dbReference type="PROSITE" id="PS50889">
    <property type="entry name" value="S4"/>
    <property type="match status" value="1"/>
</dbReference>
<sequence>MKTNNPVVQLITISADEAGQRIDNFLLAKLKGVPKSMIYRIVRKGEVRVNKGRIKPEYKLADGDVVRVPPVRVAEREEVQVSAKLDKVAALADCILFEDDYLLVLNKPSGTAVHGGSGLSFGVIEGLRALRPEARFLELVHRLDRDTSGVLLVAKKRSALRSLHEQLRLKSMQKDYLALVRGQWQSHCKAIQAPLLKNIMQSGERVVKVSSEGKPSETRFKIEERFEHATLVKASPVTGRTHQIRVHALHAGHPIAFDDRYGYREFDQQLQGTGLHRLFLHAAALRFEHPNTGETMRIEAPLDNQLRHCLLALRKNATVK</sequence>